<evidence type="ECO:0000250" key="1">
    <source>
        <dbReference type="UniProtKB" id="P47054"/>
    </source>
</evidence>
<evidence type="ECO:0000269" key="2">
    <source>
    </source>
</evidence>
<evidence type="ECO:0000303" key="3">
    <source>
    </source>
</evidence>
<evidence type="ECO:0000305" key="4"/>
<evidence type="ECO:0007829" key="5">
    <source>
        <dbReference type="PDB" id="4KNH"/>
    </source>
</evidence>
<evidence type="ECO:0007829" key="6">
    <source>
        <dbReference type="PDB" id="5CWV"/>
    </source>
</evidence>
<evidence type="ECO:0007829" key="7">
    <source>
        <dbReference type="PDB" id="5HB4"/>
    </source>
</evidence>
<evidence type="ECO:0007829" key="8">
    <source>
        <dbReference type="PDB" id="7MVV"/>
    </source>
</evidence>
<organism>
    <name type="scientific">Chaetomium thermophilum (strain DSM 1495 / CBS 144.50 / IMI 039719)</name>
    <name type="common">Thermochaetoides thermophila</name>
    <dbReference type="NCBI Taxonomy" id="759272"/>
    <lineage>
        <taxon>Eukaryota</taxon>
        <taxon>Fungi</taxon>
        <taxon>Dikarya</taxon>
        <taxon>Ascomycota</taxon>
        <taxon>Pezizomycotina</taxon>
        <taxon>Sordariomycetes</taxon>
        <taxon>Sordariomycetidae</taxon>
        <taxon>Sordariales</taxon>
        <taxon>Chaetomiaceae</taxon>
        <taxon>Thermochaetoides</taxon>
    </lineage>
</organism>
<gene>
    <name type="primary">NUP192</name>
    <name type="ORF">CTHT_0023410</name>
</gene>
<name>NU192_CHATD</name>
<comment type="function">
    <text evidence="1">Functions as a component of the nuclear pore complex (NPC). NPC components, collectively referred to as nucleoporins (NUPs), can play the role of both NPC structural components and of docking or interaction partners for transiently associated nuclear transport factors. NUP192 is located to the NPC core at the nuclear membrane and is essential for de novo assembly of NPCs.</text>
</comment>
<comment type="subunit">
    <text evidence="1 2">Component of the nuclear pore complex (NPC). NPC constitutes the exclusive means of nucleocytoplasmic transport. NPCs allow the passive diffusion of ions and small molecules and the active, nuclear transport receptor-mediated bidirectional transport of macromolecules such as proteins, RNAs, ribonucleoparticles (RNPs), and ribosomal subunits across the nuclear envelope. Due to its 8-fold rotational symmetry, all subunits are present with 8 copies or multiples thereof (By similarity). Part of a tetrameric NUP192-NUP170-NIC96-NUP53 module.</text>
</comment>
<comment type="interaction">
    <interactant intactId="EBI-4325187">
        <id>G0S4T0</id>
    </interactant>
    <interactant intactId="EBI-4325173">
        <id>G0S024</id>
        <label>NIC96</label>
    </interactant>
    <organismsDiffer>false</organismsDiffer>
    <experiments>7</experiments>
</comment>
<comment type="interaction">
    <interactant intactId="EBI-4325187">
        <id>G0S4T0</id>
    </interactant>
    <interactant intactId="EBI-16069276">
        <id>G0SAK3</id>
        <label>NUP145</label>
    </interactant>
    <organismsDiffer>false</organismsDiffer>
    <experiments>3</experiments>
</comment>
<comment type="interaction">
    <interactant intactId="EBI-4325187">
        <id>G0S4T0</id>
    </interactant>
    <interactant intactId="EBI-4325171">
        <id>G0S156</id>
        <label>NUP53</label>
    </interactant>
    <organismsDiffer>false</organismsDiffer>
    <experiments>13</experiments>
</comment>
<comment type="subcellular location">
    <subcellularLocation>
        <location evidence="1">Nucleus</location>
        <location evidence="1">Nuclear pore complex</location>
    </subcellularLocation>
    <text evidence="1">Cytoplasmic and nucleoplasmic side of the nuclear pore complex in the nuclear envelope (symmetric distribution).</text>
</comment>
<comment type="similarity">
    <text evidence="4">Belongs to the NUP186/NUP192/NUP205 family.</text>
</comment>
<accession>G0S4T0</accession>
<accession>G0ZGU6</accession>
<sequence>MTDLRKLEALQALHAELVAVRQHRFEGLQVLETLLEEQTDAFKALIAKPARDTKDREALGKEPKKLKIGEEEYSLNEDFVNDCLKLADELDLNEKESARILIDCDAEGDVETQSRPLWECGVIRFHQERKYLLDCMRLILEIAADEDIDAGLQESFGVAAEDKIFGIPPPWERNKENQPTQVKKFIPRCMEAMKGVRSMLQCMADKANARNMLQQASLVRPLDNQETLDFSRLSLVEQHECLASILHAAVQRHHATIADFQDFIKILRKWDKYDHFLIHLIPVLAAYITEFGSPEGMGDLQQARRLNDFICKGGDEDSWALPVLGAAVRAWWIAEHNGFYLDDTVQDLRGINLDEEDEQRTKQFLDALKEGAFDFILSVAADCKAQEWQDPSQLGARQWLQRKIPSLPSEPFPFSHFLQHSLMVHLEGFVDATISNLPDVLRKLRTEEDEQRQLRPNHEQDMDLERFLIIISYAYEGRPDAAMSFWEDPDSNLAGFLQWASRRASTPLVSAFCEMLRCLADNEECATAAHNFLLDEGHQASGKMKRSQSLTWSQIFKELEYFTTKVCSERPNPPQASMHRPGRPGADPAEIEPESALMLECYLRLIAKLATESEIARKRLIMDEDFNLVDTILKLSVGVIPHRLRACIFYVLKALMIRKTHEELDAMWRWVEAWMTNPFSSLPGSQGAPQRISFLGQTPGPQECMEMMFREFGTGFEQSNAFIQLLTTLLVPPEGLNSLNDSVPFPEWLGSSIRTLGIEPYVDFVFDVFANRTKDISDPSQLRILRLSCLDFVMVCLVTFNEDLIVLGHESNISIDDAMAATNLATYVRLHPFSRVMEWLFNEKVITSLINTIHQDPISLGSASPDSPLVVSILRAIQVMIKALELQETYLHLVRPEVLRYQGEAGVRRKPVANAAYSAFEDGILSHLSLVVDLGKYCNLGHAELTLACLKLLEKISTSSRILSAWSPDSGRLGHRNKAIVQLERNGEGETISASLSASIMATLDPALAASGENYRVKLAILDFLYACLRATPDQPTIAHQLLGFHCELSKLGIEPKGPFDMQKSLFHSLLNVLITLTVSEEEQGMRGYLVTLKYRVLRILQLLWKSPLSASLVMDELRATNFLFHMLLREVQIQPQLPWDGQLVTGCEFLLSDASLAYIDYLASRAAIFEYIGKELCSVSQNRIPSIKRQIFDALNGQIFVDEEAPLTIPSIFDFFDFINTDYKWEEIPSPHFTYLKDLDLGPCILEHKYAGVHYDIRKAQEILALKRKEYEHSQLATPEFLETVELEEKVLIEWLTVRNRANLLLTARLNLLQAWANLLLVMIESNDFKSTPKMAFLLQALQAILPTLEAFSSLKSDEAFELARVAKVLLWKLDFSQDSDAGLDREQFTVGNLIGDKLFQLFQLCLSAISQCSGTPELRSLYYSICYRYLTAVVDNDATVAATPASSTIGPTRSVTNARARTLKAITLYGDRLLNVICDDAYGSDTTCQTAAMILLNALVHTSRASSAAGVSPADVDCPIIDALNRLNFIGVLVDSLKEILNEWLAPSSTFDPSLSTNASPSLPIPASPSQQYTSAKLALLLQLCQTRQGAKYVLQANLFRALEQSGVFAADPELVEVDSESGVPRVVALERHYALLVALARVVGAAVTARGAHNIVQGRKFLTQHRGLVVHVLKKNAGIGGGVVGNSLASSINGGSTATMTRRDEILAQQALEERIEELAEAFMLLITATGFLEYESEQVPSEQPRAHTTFFH</sequence>
<proteinExistence type="evidence at protein level"/>
<dbReference type="EMBL" id="GL988041">
    <property type="protein sequence ID" value="EGS20509.1"/>
    <property type="molecule type" value="Genomic_DNA"/>
</dbReference>
<dbReference type="EMBL" id="JF276288">
    <property type="protein sequence ID" value="AEL00684.1"/>
    <property type="molecule type" value="Genomic_DNA"/>
</dbReference>
<dbReference type="RefSeq" id="XP_006692805.1">
    <property type="nucleotide sequence ID" value="XM_006692742.1"/>
</dbReference>
<dbReference type="PDB" id="4KNH">
    <property type="method" value="X-ray"/>
    <property type="resolution" value="2.70 A"/>
    <property type="chains" value="A/B=1-958"/>
</dbReference>
<dbReference type="PDB" id="5CWV">
    <property type="method" value="X-ray"/>
    <property type="resolution" value="3.15 A"/>
    <property type="chains" value="A/B=1397-1756"/>
</dbReference>
<dbReference type="PDB" id="5HB4">
    <property type="method" value="X-ray"/>
    <property type="resolution" value="3.20 A"/>
    <property type="chains" value="B=151-166, B=185-1756"/>
</dbReference>
<dbReference type="PDB" id="7MVT">
    <property type="method" value="X-ray"/>
    <property type="resolution" value="3.60 A"/>
    <property type="chains" value="A=185-1756"/>
</dbReference>
<dbReference type="PDB" id="7MVU">
    <property type="method" value="EM"/>
    <property type="resolution" value="3.77 A"/>
    <property type="chains" value="A=1-1756"/>
</dbReference>
<dbReference type="PDB" id="7MVV">
    <property type="method" value="EM"/>
    <property type="resolution" value="3.22 A"/>
    <property type="chains" value="A=1-1756"/>
</dbReference>
<dbReference type="PDBsum" id="4KNH"/>
<dbReference type="PDBsum" id="5CWV"/>
<dbReference type="PDBsum" id="5HB4"/>
<dbReference type="PDBsum" id="7MVT"/>
<dbReference type="PDBsum" id="7MVU"/>
<dbReference type="PDBsum" id="7MVV"/>
<dbReference type="EMDB" id="EMD-24056"/>
<dbReference type="EMDB" id="EMD-24057"/>
<dbReference type="SMR" id="G0S4T0"/>
<dbReference type="DIP" id="DIP-61834N"/>
<dbReference type="IntAct" id="G0S4T0">
    <property type="interactions" value="6"/>
</dbReference>
<dbReference type="STRING" id="759272.G0S4T0"/>
<dbReference type="TCDB" id="1.I.1.1.2">
    <property type="family name" value="the nuclear pore complex (npc) family"/>
</dbReference>
<dbReference type="GeneID" id="18256379"/>
<dbReference type="KEGG" id="cthr:CTHT_0023410"/>
<dbReference type="eggNOG" id="KOG1835">
    <property type="taxonomic scope" value="Eukaryota"/>
</dbReference>
<dbReference type="HOGENOM" id="CLU_002778_0_0_1"/>
<dbReference type="OMA" id="WSQMFAE"/>
<dbReference type="OrthoDB" id="2019644at2759"/>
<dbReference type="EvolutionaryTrace" id="G0S4T0"/>
<dbReference type="Proteomes" id="UP000008066">
    <property type="component" value="Unassembled WGS sequence"/>
</dbReference>
<dbReference type="GO" id="GO:0044611">
    <property type="term" value="C:nuclear pore inner ring"/>
    <property type="evidence" value="ECO:0007669"/>
    <property type="project" value="TreeGrafter"/>
</dbReference>
<dbReference type="GO" id="GO:0017056">
    <property type="term" value="F:structural constituent of nuclear pore"/>
    <property type="evidence" value="ECO:0007669"/>
    <property type="project" value="TreeGrafter"/>
</dbReference>
<dbReference type="GO" id="GO:0051028">
    <property type="term" value="P:mRNA transport"/>
    <property type="evidence" value="ECO:0007669"/>
    <property type="project" value="UniProtKB-KW"/>
</dbReference>
<dbReference type="GO" id="GO:0006999">
    <property type="term" value="P:nuclear pore organization"/>
    <property type="evidence" value="ECO:0007669"/>
    <property type="project" value="TreeGrafter"/>
</dbReference>
<dbReference type="GO" id="GO:0015031">
    <property type="term" value="P:protein transport"/>
    <property type="evidence" value="ECO:0007669"/>
    <property type="project" value="UniProtKB-KW"/>
</dbReference>
<dbReference type="InterPro" id="IPR021827">
    <property type="entry name" value="Nup186/Nup192/Nup205"/>
</dbReference>
<dbReference type="PANTHER" id="PTHR31344">
    <property type="entry name" value="NUCLEAR PORE COMPLEX PROTEIN NUP205"/>
    <property type="match status" value="1"/>
</dbReference>
<dbReference type="PANTHER" id="PTHR31344:SF0">
    <property type="entry name" value="NUCLEAR PORE COMPLEX PROTEIN NUP205"/>
    <property type="match status" value="1"/>
</dbReference>
<dbReference type="Pfam" id="PF11894">
    <property type="entry name" value="Nup192"/>
    <property type="match status" value="1"/>
</dbReference>
<feature type="chain" id="PRO_0000433168" description="Nucleoporin NUP192">
    <location>
        <begin position="1"/>
        <end position="1756"/>
    </location>
</feature>
<feature type="helix" evidence="5">
    <location>
        <begin position="6"/>
        <end position="21"/>
    </location>
</feature>
<feature type="helix" evidence="5">
    <location>
        <begin position="28"/>
        <end position="37"/>
    </location>
</feature>
<feature type="helix" evidence="5">
    <location>
        <begin position="39"/>
        <end position="44"/>
    </location>
</feature>
<feature type="helix" evidence="5">
    <location>
        <begin position="53"/>
        <end position="61"/>
    </location>
</feature>
<feature type="strand" evidence="5">
    <location>
        <begin position="64"/>
        <end position="68"/>
    </location>
</feature>
<feature type="strand" evidence="5">
    <location>
        <begin position="71"/>
        <end position="74"/>
    </location>
</feature>
<feature type="helix" evidence="5">
    <location>
        <begin position="77"/>
        <end position="90"/>
    </location>
</feature>
<feature type="helix" evidence="5">
    <location>
        <begin position="94"/>
        <end position="107"/>
    </location>
</feature>
<feature type="helix" evidence="5">
    <location>
        <begin position="109"/>
        <end position="112"/>
    </location>
</feature>
<feature type="helix" evidence="5">
    <location>
        <begin position="117"/>
        <end position="143"/>
    </location>
</feature>
<feature type="strand" evidence="8">
    <location>
        <begin position="146"/>
        <end position="148"/>
    </location>
</feature>
<feature type="helix" evidence="5">
    <location>
        <begin position="150"/>
        <end position="163"/>
    </location>
</feature>
<feature type="helix" evidence="5">
    <location>
        <begin position="185"/>
        <end position="217"/>
    </location>
</feature>
<feature type="helix" evidence="5">
    <location>
        <begin position="225"/>
        <end position="251"/>
    </location>
</feature>
<feature type="helix" evidence="5">
    <location>
        <begin position="257"/>
        <end position="269"/>
    </location>
</feature>
<feature type="helix" evidence="5">
    <location>
        <begin position="275"/>
        <end position="291"/>
    </location>
</feature>
<feature type="strand" evidence="5">
    <location>
        <begin position="293"/>
        <end position="296"/>
    </location>
</feature>
<feature type="helix" evidence="5">
    <location>
        <begin position="300"/>
        <end position="303"/>
    </location>
</feature>
<feature type="helix" evidence="5">
    <location>
        <begin position="305"/>
        <end position="310"/>
    </location>
</feature>
<feature type="strand" evidence="7">
    <location>
        <begin position="314"/>
        <end position="316"/>
    </location>
</feature>
<feature type="helix" evidence="5">
    <location>
        <begin position="322"/>
        <end position="336"/>
    </location>
</feature>
<feature type="helix" evidence="5">
    <location>
        <begin position="337"/>
        <end position="340"/>
    </location>
</feature>
<feature type="strand" evidence="5">
    <location>
        <begin position="343"/>
        <end position="346"/>
    </location>
</feature>
<feature type="helix" evidence="5">
    <location>
        <begin position="353"/>
        <end position="369"/>
    </location>
</feature>
<feature type="helix" evidence="5">
    <location>
        <begin position="372"/>
        <end position="383"/>
    </location>
</feature>
<feature type="helix" evidence="5">
    <location>
        <begin position="391"/>
        <end position="393"/>
    </location>
</feature>
<feature type="turn" evidence="5">
    <location>
        <begin position="394"/>
        <end position="397"/>
    </location>
</feature>
<feature type="helix" evidence="5">
    <location>
        <begin position="416"/>
        <end position="436"/>
    </location>
</feature>
<feature type="helix" evidence="5">
    <location>
        <begin position="438"/>
        <end position="454"/>
    </location>
</feature>
<feature type="turn" evidence="7">
    <location>
        <begin position="456"/>
        <end position="459"/>
    </location>
</feature>
<feature type="helix" evidence="5">
    <location>
        <begin position="463"/>
        <end position="475"/>
    </location>
</feature>
<feature type="helix" evidence="5">
    <location>
        <begin position="479"/>
        <end position="486"/>
    </location>
</feature>
<feature type="helix" evidence="5">
    <location>
        <begin position="492"/>
        <end position="500"/>
    </location>
</feature>
<feature type="helix" evidence="5">
    <location>
        <begin position="506"/>
        <end position="517"/>
    </location>
</feature>
<feature type="helix" evidence="5">
    <location>
        <begin position="523"/>
        <end position="533"/>
    </location>
</feature>
<feature type="turn" evidence="5">
    <location>
        <begin position="545"/>
        <end position="547"/>
    </location>
</feature>
<feature type="helix" evidence="5">
    <location>
        <begin position="552"/>
        <end position="567"/>
    </location>
</feature>
<feature type="helix" evidence="5">
    <location>
        <begin position="593"/>
        <end position="612"/>
    </location>
</feature>
<feature type="helix" evidence="5">
    <location>
        <begin position="614"/>
        <end position="621"/>
    </location>
</feature>
<feature type="turn" evidence="5">
    <location>
        <begin position="624"/>
        <end position="626"/>
    </location>
</feature>
<feature type="helix" evidence="5">
    <location>
        <begin position="628"/>
        <end position="637"/>
    </location>
</feature>
<feature type="helix" evidence="5">
    <location>
        <begin position="642"/>
        <end position="654"/>
    </location>
</feature>
<feature type="helix" evidence="5">
    <location>
        <begin position="661"/>
        <end position="676"/>
    </location>
</feature>
<feature type="helix" evidence="5">
    <location>
        <begin position="701"/>
        <end position="712"/>
    </location>
</feature>
<feature type="helix" evidence="5">
    <location>
        <begin position="716"/>
        <end position="729"/>
    </location>
</feature>
<feature type="strand" evidence="7">
    <location>
        <begin position="736"/>
        <end position="738"/>
    </location>
</feature>
<feature type="turn" evidence="5">
    <location>
        <begin position="747"/>
        <end position="753"/>
    </location>
</feature>
<feature type="strand" evidence="5">
    <location>
        <begin position="756"/>
        <end position="758"/>
    </location>
</feature>
<feature type="helix" evidence="5">
    <location>
        <begin position="759"/>
        <end position="770"/>
    </location>
</feature>
<feature type="helix" evidence="5">
    <location>
        <begin position="772"/>
        <end position="775"/>
    </location>
</feature>
<feature type="helix" evidence="5">
    <location>
        <begin position="779"/>
        <end position="798"/>
    </location>
</feature>
<feature type="helix" evidence="5">
    <location>
        <begin position="802"/>
        <end position="810"/>
    </location>
</feature>
<feature type="turn" evidence="5">
    <location>
        <begin position="811"/>
        <end position="814"/>
    </location>
</feature>
<feature type="helix" evidence="5">
    <location>
        <begin position="821"/>
        <end position="830"/>
    </location>
</feature>
<feature type="helix" evidence="5">
    <location>
        <begin position="833"/>
        <end position="840"/>
    </location>
</feature>
<feature type="helix" evidence="5">
    <location>
        <begin position="843"/>
        <end position="853"/>
    </location>
</feature>
<feature type="helix" evidence="5">
    <location>
        <begin position="857"/>
        <end position="862"/>
    </location>
</feature>
<feature type="helix" evidence="5">
    <location>
        <begin position="868"/>
        <end position="891"/>
    </location>
</feature>
<feature type="helix" evidence="5">
    <location>
        <begin position="894"/>
        <end position="905"/>
    </location>
</feature>
<feature type="helix" evidence="5">
    <location>
        <begin position="920"/>
        <end position="924"/>
    </location>
</feature>
<feature type="helix" evidence="5">
    <location>
        <begin position="928"/>
        <end position="937"/>
    </location>
</feature>
<feature type="turn" evidence="5">
    <location>
        <begin position="938"/>
        <end position="941"/>
    </location>
</feature>
<feature type="helix" evidence="5">
    <location>
        <begin position="943"/>
        <end position="956"/>
    </location>
</feature>
<feature type="helix" evidence="7">
    <location>
        <begin position="962"/>
        <end position="964"/>
    </location>
</feature>
<feature type="helix" evidence="7">
    <location>
        <begin position="978"/>
        <end position="985"/>
    </location>
</feature>
<feature type="helix" evidence="7">
    <location>
        <begin position="989"/>
        <end position="1001"/>
    </location>
</feature>
<feature type="turn" evidence="7">
    <location>
        <begin position="1006"/>
        <end position="1010"/>
    </location>
</feature>
<feature type="helix" evidence="7">
    <location>
        <begin position="1013"/>
        <end position="1030"/>
    </location>
</feature>
<feature type="strand" evidence="8">
    <location>
        <begin position="1031"/>
        <end position="1035"/>
    </location>
</feature>
<feature type="helix" evidence="7">
    <location>
        <begin position="1038"/>
        <end position="1042"/>
    </location>
</feature>
<feature type="turn" evidence="7">
    <location>
        <begin position="1059"/>
        <end position="1063"/>
    </location>
</feature>
<feature type="helix" evidence="7">
    <location>
        <begin position="1066"/>
        <end position="1074"/>
    </location>
</feature>
<feature type="strand" evidence="8">
    <location>
        <begin position="1082"/>
        <end position="1084"/>
    </location>
</feature>
<feature type="helix" evidence="7">
    <location>
        <begin position="1088"/>
        <end position="1106"/>
    </location>
</feature>
<feature type="helix" evidence="7">
    <location>
        <begin position="1108"/>
        <end position="1120"/>
    </location>
</feature>
<feature type="helix" evidence="7">
    <location>
        <begin position="1123"/>
        <end position="1130"/>
    </location>
</feature>
<feature type="strand" evidence="8">
    <location>
        <begin position="1136"/>
        <end position="1138"/>
    </location>
</feature>
<feature type="strand" evidence="8">
    <location>
        <begin position="1145"/>
        <end position="1147"/>
    </location>
</feature>
<feature type="helix" evidence="8">
    <location>
        <begin position="1149"/>
        <end position="1152"/>
    </location>
</feature>
<feature type="helix" evidence="7">
    <location>
        <begin position="1156"/>
        <end position="1176"/>
    </location>
</feature>
<feature type="turn" evidence="7">
    <location>
        <begin position="1177"/>
        <end position="1181"/>
    </location>
</feature>
<feature type="strand" evidence="7">
    <location>
        <begin position="1182"/>
        <end position="1184"/>
    </location>
</feature>
<feature type="helix" evidence="7">
    <location>
        <begin position="1186"/>
        <end position="1197"/>
    </location>
</feature>
<feature type="strand" evidence="7">
    <location>
        <begin position="1202"/>
        <end position="1206"/>
    </location>
</feature>
<feature type="turn" evidence="7">
    <location>
        <begin position="1213"/>
        <end position="1215"/>
    </location>
</feature>
<feature type="helix" evidence="7">
    <location>
        <begin position="1226"/>
        <end position="1228"/>
    </location>
</feature>
<feature type="helix" evidence="7">
    <location>
        <begin position="1234"/>
        <end position="1239"/>
    </location>
</feature>
<feature type="turn" evidence="8">
    <location>
        <begin position="1243"/>
        <end position="1245"/>
    </location>
</feature>
<feature type="helix" evidence="7">
    <location>
        <begin position="1258"/>
        <end position="1275"/>
    </location>
</feature>
<feature type="helix" evidence="7">
    <location>
        <begin position="1281"/>
        <end position="1327"/>
    </location>
</feature>
<feature type="helix" evidence="7">
    <location>
        <begin position="1333"/>
        <end position="1353"/>
    </location>
</feature>
<feature type="turn" evidence="7">
    <location>
        <begin position="1354"/>
        <end position="1356"/>
    </location>
</feature>
<feature type="helix" evidence="7">
    <location>
        <begin position="1358"/>
        <end position="1372"/>
    </location>
</feature>
<feature type="turn" evidence="6">
    <location>
        <begin position="1397"/>
        <end position="1400"/>
    </location>
</feature>
<feature type="helix" evidence="6">
    <location>
        <begin position="1401"/>
        <end position="1413"/>
    </location>
</feature>
<feature type="helix" evidence="6">
    <location>
        <begin position="1418"/>
        <end position="1433"/>
    </location>
</feature>
<feature type="turn" evidence="6">
    <location>
        <begin position="1434"/>
        <end position="1436"/>
    </location>
</feature>
<feature type="helix" evidence="6">
    <location>
        <begin position="1457"/>
        <end position="1471"/>
    </location>
</feature>
<feature type="helix" evidence="6">
    <location>
        <begin position="1473"/>
        <end position="1483"/>
    </location>
</feature>
<feature type="helix" evidence="6">
    <location>
        <begin position="1488"/>
        <end position="1504"/>
    </location>
</feature>
<feature type="turn" evidence="6">
    <location>
        <begin position="1505"/>
        <end position="1508"/>
    </location>
</feature>
<feature type="helix" evidence="6">
    <location>
        <begin position="1521"/>
        <end position="1528"/>
    </location>
</feature>
<feature type="helix" evidence="6">
    <location>
        <begin position="1531"/>
        <end position="1537"/>
    </location>
</feature>
<feature type="helix" evidence="6">
    <location>
        <begin position="1538"/>
        <end position="1541"/>
    </location>
</feature>
<feature type="helix" evidence="6">
    <location>
        <begin position="1542"/>
        <end position="1547"/>
    </location>
</feature>
<feature type="helix" evidence="6">
    <location>
        <begin position="1573"/>
        <end position="1587"/>
    </location>
</feature>
<feature type="helix" evidence="6">
    <location>
        <begin position="1590"/>
        <end position="1598"/>
    </location>
</feature>
<feature type="helix" evidence="6">
    <location>
        <begin position="1601"/>
        <end position="1608"/>
    </location>
</feature>
<feature type="strand" evidence="6">
    <location>
        <begin position="1610"/>
        <end position="1613"/>
    </location>
</feature>
<feature type="helix" evidence="6">
    <location>
        <begin position="1628"/>
        <end position="1651"/>
    </location>
</feature>
<feature type="turn" evidence="7">
    <location>
        <begin position="1655"/>
        <end position="1657"/>
    </location>
</feature>
<feature type="helix" evidence="6">
    <location>
        <begin position="1658"/>
        <end position="1667"/>
    </location>
</feature>
<feature type="turn" evidence="6">
    <location>
        <begin position="1668"/>
        <end position="1670"/>
    </location>
</feature>
<feature type="helix" evidence="6">
    <location>
        <begin position="1671"/>
        <end position="1676"/>
    </location>
</feature>
<feature type="turn" evidence="6">
    <location>
        <begin position="1704"/>
        <end position="1707"/>
    </location>
</feature>
<feature type="helix" evidence="6">
    <location>
        <begin position="1708"/>
        <end position="1731"/>
    </location>
</feature>
<feature type="turn" evidence="6">
    <location>
        <begin position="1732"/>
        <end position="1734"/>
    </location>
</feature>
<feature type="helix" evidence="6">
    <location>
        <begin position="1735"/>
        <end position="1739"/>
    </location>
</feature>
<reference key="1">
    <citation type="journal article" date="2011" name="Cell">
        <title>Insight into structure and assembly of the nuclear pore complex by utilizing the genome of a eukaryotic thermophile.</title>
        <authorList>
            <person name="Amlacher S."/>
            <person name="Sarges P."/>
            <person name="Flemming D."/>
            <person name="van Noort V."/>
            <person name="Kunze R."/>
            <person name="Devos D.P."/>
            <person name="Arumugam M."/>
            <person name="Bork P."/>
            <person name="Hurt E."/>
        </authorList>
    </citation>
    <scope>NUCLEOTIDE SEQUENCE [LARGE SCALE GENOMIC DNA]</scope>
    <scope>SUBUNIT</scope>
    <source>
        <strain>DSM 1495 / CBS 144.50 / IMI 039719</strain>
    </source>
</reference>
<reference key="2">
    <citation type="journal article" date="2014" name="Proc. Natl. Acad. Sci. U.S.A.">
        <title>Evidence for an evolutionary relationship between the large adaptor nucleoporin Nup192 and karyopherins.</title>
        <authorList>
            <person name="Stuwe T."/>
            <person name="Lin D.H."/>
            <person name="Collins L.N."/>
            <person name="Hurt E."/>
            <person name="Hoelz A."/>
        </authorList>
    </citation>
    <scope>X-RAY CRYSTALLOGRAPHY (2.70 ANGSTROMS) OF 1-958</scope>
</reference>
<protein>
    <recommendedName>
        <fullName evidence="3">Nucleoporin NUP192</fullName>
    </recommendedName>
    <alternativeName>
        <fullName>Nuclear pore protein NUP192</fullName>
    </alternativeName>
</protein>
<keyword id="KW-0002">3D-structure</keyword>
<keyword id="KW-0509">mRNA transport</keyword>
<keyword id="KW-0906">Nuclear pore complex</keyword>
<keyword id="KW-0539">Nucleus</keyword>
<keyword id="KW-0653">Protein transport</keyword>
<keyword id="KW-1185">Reference proteome</keyword>
<keyword id="KW-0811">Translocation</keyword>
<keyword id="KW-0813">Transport</keyword>